<proteinExistence type="evidence at protein level"/>
<comment type="function">
    <text evidence="1">Targets vasopressin-oxytocin related receptors (By similarity). No effect observed when injected into goldfish or into mice.</text>
</comment>
<comment type="subcellular location">
    <subcellularLocation>
        <location evidence="3">Secreted</location>
    </subcellularLocation>
</comment>
<comment type="tissue specificity">
    <text evidence="6">Expressed by the venom duct.</text>
</comment>
<comment type="mass spectrometry"/>
<comment type="similarity">
    <text evidence="5">Belongs to the vasopressin/oxytocin family.</text>
</comment>
<sequence>HPTKPCMYCSFGQCVGPHICCGPTGCEMGTAEANMCSEEDEDPIPCQVFGSDCALNNPDNIHGHCVADGICCVDDTCTTHLGCL</sequence>
<evidence type="ECO:0000250" key="1"/>
<evidence type="ECO:0000250" key="2">
    <source>
        <dbReference type="UniProtKB" id="P01175"/>
    </source>
</evidence>
<evidence type="ECO:0000269" key="3">
    <source>
    </source>
</evidence>
<evidence type="ECO:0000303" key="4">
    <source>
    </source>
</evidence>
<evidence type="ECO:0000305" key="5"/>
<evidence type="ECO:0000305" key="6">
    <source>
    </source>
</evidence>
<feature type="chain" id="PRO_0000160940" description="Conophysin-R" evidence="3">
    <location>
        <begin position="1"/>
        <end position="84"/>
    </location>
</feature>
<feature type="disulfide bond" evidence="2">
    <location>
        <begin position="6"/>
        <end position="46"/>
    </location>
</feature>
<feature type="disulfide bond" evidence="2">
    <location>
        <begin position="9"/>
        <end position="20"/>
    </location>
</feature>
<feature type="disulfide bond" evidence="2">
    <location>
        <begin position="14"/>
        <end position="36"/>
    </location>
</feature>
<feature type="disulfide bond" evidence="2">
    <location>
        <begin position="21"/>
        <end position="26"/>
    </location>
</feature>
<feature type="disulfide bond" evidence="2">
    <location>
        <begin position="53"/>
        <end position="71"/>
    </location>
</feature>
<feature type="disulfide bond" evidence="2">
    <location>
        <begin position="65"/>
        <end position="83"/>
    </location>
</feature>
<feature type="disulfide bond" evidence="2">
    <location>
        <begin position="72"/>
        <end position="77"/>
    </location>
</feature>
<reference key="1">
    <citation type="journal article" date="2002" name="Toxicon">
        <title>Conophysin-R, a Conus radiatus venom peptide belonging to the neurophysin family.</title>
        <authorList>
            <person name="Lirazan M."/>
            <person name="Jimenez E.C."/>
            <person name="Grey Craig A."/>
            <person name="Olivera B.M."/>
            <person name="Cruz L.J."/>
        </authorList>
    </citation>
    <scope>PROTEIN SEQUENCE</scope>
    <scope>SUBCELLULAR LOCATION</scope>
    <scope>MASS SPECTROMETRY</scope>
    <source>
        <tissue>Venom</tissue>
    </source>
</reference>
<dbReference type="SMR" id="P58990"/>
<dbReference type="ConoServer" id="5810">
    <property type="toxin name" value="conophysin-R"/>
</dbReference>
<dbReference type="GO" id="GO:0005615">
    <property type="term" value="C:extracellular space"/>
    <property type="evidence" value="ECO:0007669"/>
    <property type="project" value="TreeGrafter"/>
</dbReference>
<dbReference type="GO" id="GO:0030141">
    <property type="term" value="C:secretory granule"/>
    <property type="evidence" value="ECO:0007669"/>
    <property type="project" value="TreeGrafter"/>
</dbReference>
<dbReference type="GO" id="GO:0005185">
    <property type="term" value="F:neurohypophyseal hormone activity"/>
    <property type="evidence" value="ECO:0007669"/>
    <property type="project" value="InterPro"/>
</dbReference>
<dbReference type="GO" id="GO:0090729">
    <property type="term" value="F:toxin activity"/>
    <property type="evidence" value="ECO:0007669"/>
    <property type="project" value="UniProtKB-KW"/>
</dbReference>
<dbReference type="Gene3D" id="2.60.9.10">
    <property type="entry name" value="Neurohypophysial hormone domain"/>
    <property type="match status" value="1"/>
</dbReference>
<dbReference type="InterPro" id="IPR000981">
    <property type="entry name" value="Neurhyp_horm"/>
</dbReference>
<dbReference type="InterPro" id="IPR036387">
    <property type="entry name" value="Neurhyp_horm_dom_sf"/>
</dbReference>
<dbReference type="PANTHER" id="PTHR11681:SF5">
    <property type="entry name" value="ISOTOCIN"/>
    <property type="match status" value="1"/>
</dbReference>
<dbReference type="PANTHER" id="PTHR11681">
    <property type="entry name" value="NEUROPHYSIN"/>
    <property type="match status" value="1"/>
</dbReference>
<dbReference type="Pfam" id="PF00184">
    <property type="entry name" value="Hormone_5"/>
    <property type="match status" value="1"/>
</dbReference>
<dbReference type="PRINTS" id="PR00831">
    <property type="entry name" value="NEUROPHYSIN"/>
</dbReference>
<dbReference type="SMART" id="SM00003">
    <property type="entry name" value="NH"/>
    <property type="match status" value="1"/>
</dbReference>
<dbReference type="SUPFAM" id="SSF49606">
    <property type="entry name" value="Neurophysin II"/>
    <property type="match status" value="1"/>
</dbReference>
<organism>
    <name type="scientific">Conus radiatus</name>
    <name type="common">Rayed cone</name>
    <dbReference type="NCBI Taxonomy" id="61198"/>
    <lineage>
        <taxon>Eukaryota</taxon>
        <taxon>Metazoa</taxon>
        <taxon>Spiralia</taxon>
        <taxon>Lophotrochozoa</taxon>
        <taxon>Mollusca</taxon>
        <taxon>Gastropoda</taxon>
        <taxon>Caenogastropoda</taxon>
        <taxon>Neogastropoda</taxon>
        <taxon>Conoidea</taxon>
        <taxon>Conidae</taxon>
        <taxon>Conus</taxon>
        <taxon>Phasmoconus</taxon>
    </lineage>
</organism>
<name>CXPH_CONRA</name>
<keyword id="KW-0903">Direct protein sequencing</keyword>
<keyword id="KW-1015">Disulfide bond</keyword>
<keyword id="KW-1213">G-protein coupled receptor impairing toxin</keyword>
<keyword id="KW-0964">Secreted</keyword>
<keyword id="KW-0800">Toxin</keyword>
<accession>P58990</accession>
<protein>
    <recommendedName>
        <fullName evidence="4">Conophysin-R</fullName>
    </recommendedName>
</protein>